<sequence>MAASGFLLIASFMLVLLVLARPLGSFLARLIEGDPFMPLQKIEAGLWRCSGVKNVEMNGWQYALAILLFNILGIALLFALLMMQGALPLNPENMPGMSWHLALNTAVSFVTNTNWQAYSGENTLSYLSQMAGLTVQNFLSAATGIAVAFALIRAFSRHSAATLGNAWVDLVRITLYVLLPIALIIALIFVSQGVLQNLDGYLHITTLEGVKQTLPMGPVASQEAIKMLGTNGGGFFGANSAHPFENPTAFSNFVQMLAIFLIPCALCFAFGQVVGDTRQGHALIWAMSLIFVVAVVVVMYAELAGNPHLIKLGADSNINMEGKESRFGILATSMYAVVTTAASCGAVNAMHDSFTALGGMVPMWLMQIGEVVFGGVGSGLYGMLLFVLLTVFIAGLMIGRTPEYLGKKIDVFDMKMTALAILVTPAVVLLGTALALCTDAGRAGILNPGAHGFSEVLYALSSAANNNGSAFAGLSVNTPFYNLLLAAAMFLGRFGVILPVLAIASSLVAKKRQPAGNGTLPTSGPLFIGLLVGTVLLVGALTFIPALALGPVAEHLQVWLTH</sequence>
<gene>
    <name evidence="1" type="primary">kdpA</name>
    <name type="ordered locus">YE2960</name>
</gene>
<accession>A1JQY4</accession>
<name>KDPA_YERE8</name>
<proteinExistence type="inferred from homology"/>
<keyword id="KW-0997">Cell inner membrane</keyword>
<keyword id="KW-1003">Cell membrane</keyword>
<keyword id="KW-0406">Ion transport</keyword>
<keyword id="KW-0472">Membrane</keyword>
<keyword id="KW-0630">Potassium</keyword>
<keyword id="KW-0633">Potassium transport</keyword>
<keyword id="KW-0812">Transmembrane</keyword>
<keyword id="KW-1133">Transmembrane helix</keyword>
<keyword id="KW-0813">Transport</keyword>
<feature type="chain" id="PRO_1000022251" description="Potassium-transporting ATPase potassium-binding subunit">
    <location>
        <begin position="1"/>
        <end position="562"/>
    </location>
</feature>
<feature type="transmembrane region" description="Helical" evidence="1">
    <location>
        <begin position="6"/>
        <end position="26"/>
    </location>
</feature>
<feature type="transmembrane region" description="Helical" evidence="1">
    <location>
        <begin position="63"/>
        <end position="83"/>
    </location>
</feature>
<feature type="transmembrane region" description="Helical" evidence="1">
    <location>
        <begin position="132"/>
        <end position="152"/>
    </location>
</feature>
<feature type="transmembrane region" description="Helical" evidence="1">
    <location>
        <begin position="175"/>
        <end position="195"/>
    </location>
</feature>
<feature type="transmembrane region" description="Helical" evidence="1">
    <location>
        <begin position="253"/>
        <end position="273"/>
    </location>
</feature>
<feature type="transmembrane region" description="Helical" evidence="1">
    <location>
        <begin position="283"/>
        <end position="303"/>
    </location>
</feature>
<feature type="transmembrane region" description="Helical" evidence="1">
    <location>
        <begin position="327"/>
        <end position="347"/>
    </location>
</feature>
<feature type="transmembrane region" description="Helical" evidence="1">
    <location>
        <begin position="356"/>
        <end position="376"/>
    </location>
</feature>
<feature type="transmembrane region" description="Helical" evidence="1">
    <location>
        <begin position="379"/>
        <end position="399"/>
    </location>
</feature>
<feature type="transmembrane region" description="Helical" evidence="1">
    <location>
        <begin position="416"/>
        <end position="436"/>
    </location>
</feature>
<feature type="transmembrane region" description="Helical" evidence="1">
    <location>
        <begin position="483"/>
        <end position="503"/>
    </location>
</feature>
<feature type="transmembrane region" description="Helical" evidence="1">
    <location>
        <begin position="526"/>
        <end position="546"/>
    </location>
</feature>
<reference key="1">
    <citation type="journal article" date="2006" name="PLoS Genet.">
        <title>The complete genome sequence and comparative genome analysis of the high pathogenicity Yersinia enterocolitica strain 8081.</title>
        <authorList>
            <person name="Thomson N.R."/>
            <person name="Howard S."/>
            <person name="Wren B.W."/>
            <person name="Holden M.T.G."/>
            <person name="Crossman L."/>
            <person name="Challis G.L."/>
            <person name="Churcher C."/>
            <person name="Mungall K."/>
            <person name="Brooks K."/>
            <person name="Chillingworth T."/>
            <person name="Feltwell T."/>
            <person name="Abdellah Z."/>
            <person name="Hauser H."/>
            <person name="Jagels K."/>
            <person name="Maddison M."/>
            <person name="Moule S."/>
            <person name="Sanders M."/>
            <person name="Whitehead S."/>
            <person name="Quail M.A."/>
            <person name="Dougan G."/>
            <person name="Parkhill J."/>
            <person name="Prentice M.B."/>
        </authorList>
    </citation>
    <scope>NUCLEOTIDE SEQUENCE [LARGE SCALE GENOMIC DNA]</scope>
    <source>
        <strain>NCTC 13174 / 8081</strain>
    </source>
</reference>
<evidence type="ECO:0000255" key="1">
    <source>
        <dbReference type="HAMAP-Rule" id="MF_00275"/>
    </source>
</evidence>
<comment type="function">
    <text evidence="1">Part of the high-affinity ATP-driven potassium transport (or Kdp) system, which catalyzes the hydrolysis of ATP coupled with the electrogenic transport of potassium into the cytoplasm. This subunit binds the periplasmic potassium ions and delivers the ions to the membrane domain of KdpB through an intramembrane tunnel.</text>
</comment>
<comment type="subunit">
    <text evidence="1">The system is composed of three essential subunits: KdpA, KdpB and KdpC.</text>
</comment>
<comment type="subcellular location">
    <subcellularLocation>
        <location evidence="1">Cell inner membrane</location>
        <topology evidence="1">Multi-pass membrane protein</topology>
    </subcellularLocation>
</comment>
<comment type="similarity">
    <text evidence="1">Belongs to the KdpA family.</text>
</comment>
<organism>
    <name type="scientific">Yersinia enterocolitica serotype O:8 / biotype 1B (strain NCTC 13174 / 8081)</name>
    <dbReference type="NCBI Taxonomy" id="393305"/>
    <lineage>
        <taxon>Bacteria</taxon>
        <taxon>Pseudomonadati</taxon>
        <taxon>Pseudomonadota</taxon>
        <taxon>Gammaproteobacteria</taxon>
        <taxon>Enterobacterales</taxon>
        <taxon>Yersiniaceae</taxon>
        <taxon>Yersinia</taxon>
    </lineage>
</organism>
<dbReference type="EMBL" id="AM286415">
    <property type="protein sequence ID" value="CAL12999.1"/>
    <property type="molecule type" value="Genomic_DNA"/>
</dbReference>
<dbReference type="RefSeq" id="WP_011816819.1">
    <property type="nucleotide sequence ID" value="NC_008800.1"/>
</dbReference>
<dbReference type="RefSeq" id="YP_001007149.1">
    <property type="nucleotide sequence ID" value="NC_008800.1"/>
</dbReference>
<dbReference type="SMR" id="A1JQY4"/>
<dbReference type="KEGG" id="yen:YE2960"/>
<dbReference type="PATRIC" id="fig|393305.7.peg.3150"/>
<dbReference type="eggNOG" id="COG2060">
    <property type="taxonomic scope" value="Bacteria"/>
</dbReference>
<dbReference type="HOGENOM" id="CLU_018614_3_0_6"/>
<dbReference type="OrthoDB" id="9763796at2"/>
<dbReference type="Proteomes" id="UP000000642">
    <property type="component" value="Chromosome"/>
</dbReference>
<dbReference type="GO" id="GO:0005886">
    <property type="term" value="C:plasma membrane"/>
    <property type="evidence" value="ECO:0007669"/>
    <property type="project" value="UniProtKB-SubCell"/>
</dbReference>
<dbReference type="GO" id="GO:0008556">
    <property type="term" value="F:P-type potassium transmembrane transporter activity"/>
    <property type="evidence" value="ECO:0007669"/>
    <property type="project" value="InterPro"/>
</dbReference>
<dbReference type="GO" id="GO:0030955">
    <property type="term" value="F:potassium ion binding"/>
    <property type="evidence" value="ECO:0007669"/>
    <property type="project" value="UniProtKB-UniRule"/>
</dbReference>
<dbReference type="HAMAP" id="MF_00275">
    <property type="entry name" value="KdpA"/>
    <property type="match status" value="1"/>
</dbReference>
<dbReference type="InterPro" id="IPR004623">
    <property type="entry name" value="KdpA"/>
</dbReference>
<dbReference type="NCBIfam" id="TIGR00680">
    <property type="entry name" value="kdpA"/>
    <property type="match status" value="1"/>
</dbReference>
<dbReference type="PANTHER" id="PTHR30607">
    <property type="entry name" value="POTASSIUM-TRANSPORTING ATPASE A CHAIN"/>
    <property type="match status" value="1"/>
</dbReference>
<dbReference type="PANTHER" id="PTHR30607:SF2">
    <property type="entry name" value="POTASSIUM-TRANSPORTING ATPASE POTASSIUM-BINDING SUBUNIT"/>
    <property type="match status" value="1"/>
</dbReference>
<dbReference type="Pfam" id="PF03814">
    <property type="entry name" value="KdpA"/>
    <property type="match status" value="1"/>
</dbReference>
<dbReference type="PIRSF" id="PIRSF001294">
    <property type="entry name" value="K_ATPaseA"/>
    <property type="match status" value="1"/>
</dbReference>
<protein>
    <recommendedName>
        <fullName evidence="1">Potassium-transporting ATPase potassium-binding subunit</fullName>
    </recommendedName>
    <alternativeName>
        <fullName evidence="1">ATP phosphohydrolase [potassium-transporting] A chain</fullName>
    </alternativeName>
    <alternativeName>
        <fullName evidence="1">Potassium-binding and translocating subunit A</fullName>
    </alternativeName>
    <alternativeName>
        <fullName evidence="1">Potassium-translocating ATPase A chain</fullName>
    </alternativeName>
</protein>